<evidence type="ECO:0000255" key="1">
    <source>
        <dbReference type="HAMAP-Rule" id="MF_00693"/>
    </source>
</evidence>
<evidence type="ECO:0000256" key="2">
    <source>
        <dbReference type="SAM" id="MobiDB-lite"/>
    </source>
</evidence>
<reference key="1">
    <citation type="journal article" date="2008" name="Environ. Microbiol.">
        <title>The genome of Erwinia tasmaniensis strain Et1/99, a non-pathogenic bacterium in the genus Erwinia.</title>
        <authorList>
            <person name="Kube M."/>
            <person name="Migdoll A.M."/>
            <person name="Mueller I."/>
            <person name="Kuhl H."/>
            <person name="Beck A."/>
            <person name="Reinhardt R."/>
            <person name="Geider K."/>
        </authorList>
    </citation>
    <scope>NUCLEOTIDE SEQUENCE [LARGE SCALE GENOMIC DNA]</scope>
    <source>
        <strain>DSM 17950 / CFBP 7177 / CIP 109463 / NCPPB 4357 / Et1/99</strain>
    </source>
</reference>
<proteinExistence type="inferred from homology"/>
<sequence>MAGHSKWANTKHRKAAQDAKRGKIFTKVIRELVTAAKLGGGDAGSNPRLRAAMDKALANNMTRDTMNRAIARGVGGDDDSNMETIIYEGYGPGGTAVMVECLSDNRNRTVSEVRHAFTKTGGNLGTDGSVAYLFTKKGVISYAPGLDEDAVMDAALEAGADDVMTYDDGAIDVFTAWENMGAVKDVLDAAGLQADSAEVTMIPSTKADMDAETAPKLLRLIDMLEDCDDVQEVYHNGEISDEVAETL</sequence>
<feature type="chain" id="PRO_1000132191" description="Probable transcriptional regulatory protein ETA_14870">
    <location>
        <begin position="1"/>
        <end position="247"/>
    </location>
</feature>
<feature type="region of interest" description="Disordered" evidence="2">
    <location>
        <begin position="1"/>
        <end position="20"/>
    </location>
</feature>
<organism>
    <name type="scientific">Erwinia tasmaniensis (strain DSM 17950 / CFBP 7177 / CIP 109463 / NCPPB 4357 / Et1/99)</name>
    <dbReference type="NCBI Taxonomy" id="465817"/>
    <lineage>
        <taxon>Bacteria</taxon>
        <taxon>Pseudomonadati</taxon>
        <taxon>Pseudomonadota</taxon>
        <taxon>Gammaproteobacteria</taxon>
        <taxon>Enterobacterales</taxon>
        <taxon>Erwiniaceae</taxon>
        <taxon>Erwinia</taxon>
    </lineage>
</organism>
<accession>B2VJ92</accession>
<gene>
    <name type="ordered locus">ETA_14870</name>
</gene>
<comment type="subcellular location">
    <subcellularLocation>
        <location evidence="1">Cytoplasm</location>
    </subcellularLocation>
</comment>
<comment type="similarity">
    <text evidence="1">Belongs to the TACO1 family.</text>
</comment>
<keyword id="KW-0963">Cytoplasm</keyword>
<keyword id="KW-0238">DNA-binding</keyword>
<keyword id="KW-1185">Reference proteome</keyword>
<keyword id="KW-0804">Transcription</keyword>
<keyword id="KW-0805">Transcription regulation</keyword>
<protein>
    <recommendedName>
        <fullName evidence="1">Probable transcriptional regulatory protein ETA_14870</fullName>
    </recommendedName>
</protein>
<name>Y1487_ERWT9</name>
<dbReference type="EMBL" id="CU468135">
    <property type="protein sequence ID" value="CAO96533.1"/>
    <property type="molecule type" value="Genomic_DNA"/>
</dbReference>
<dbReference type="RefSeq" id="WP_012441227.1">
    <property type="nucleotide sequence ID" value="NC_010694.1"/>
</dbReference>
<dbReference type="SMR" id="B2VJ92"/>
<dbReference type="STRING" id="465817.ETA_14870"/>
<dbReference type="KEGG" id="eta:ETA_14870"/>
<dbReference type="eggNOG" id="COG0217">
    <property type="taxonomic scope" value="Bacteria"/>
</dbReference>
<dbReference type="HOGENOM" id="CLU_062974_2_2_6"/>
<dbReference type="OrthoDB" id="9781053at2"/>
<dbReference type="Proteomes" id="UP000001726">
    <property type="component" value="Chromosome"/>
</dbReference>
<dbReference type="GO" id="GO:0005829">
    <property type="term" value="C:cytosol"/>
    <property type="evidence" value="ECO:0007669"/>
    <property type="project" value="TreeGrafter"/>
</dbReference>
<dbReference type="GO" id="GO:0003677">
    <property type="term" value="F:DNA binding"/>
    <property type="evidence" value="ECO:0007669"/>
    <property type="project" value="UniProtKB-UniRule"/>
</dbReference>
<dbReference type="GO" id="GO:0006355">
    <property type="term" value="P:regulation of DNA-templated transcription"/>
    <property type="evidence" value="ECO:0007669"/>
    <property type="project" value="UniProtKB-UniRule"/>
</dbReference>
<dbReference type="FunFam" id="1.10.10.200:FF:000001">
    <property type="entry name" value="Probable transcriptional regulatory protein YebC"/>
    <property type="match status" value="1"/>
</dbReference>
<dbReference type="FunFam" id="3.30.70.980:FF:000002">
    <property type="entry name" value="Probable transcriptional regulatory protein YebC"/>
    <property type="match status" value="1"/>
</dbReference>
<dbReference type="Gene3D" id="1.10.10.200">
    <property type="match status" value="1"/>
</dbReference>
<dbReference type="Gene3D" id="3.30.70.980">
    <property type="match status" value="2"/>
</dbReference>
<dbReference type="HAMAP" id="MF_00693">
    <property type="entry name" value="Transcrip_reg_TACO1"/>
    <property type="match status" value="1"/>
</dbReference>
<dbReference type="InterPro" id="IPR017856">
    <property type="entry name" value="Integrase-like_N"/>
</dbReference>
<dbReference type="InterPro" id="IPR048300">
    <property type="entry name" value="TACO1_YebC-like_2nd/3rd_dom"/>
</dbReference>
<dbReference type="InterPro" id="IPR049083">
    <property type="entry name" value="TACO1_YebC_N"/>
</dbReference>
<dbReference type="InterPro" id="IPR002876">
    <property type="entry name" value="Transcrip_reg_TACO1-like"/>
</dbReference>
<dbReference type="InterPro" id="IPR026564">
    <property type="entry name" value="Transcrip_reg_TACO1-like_dom3"/>
</dbReference>
<dbReference type="InterPro" id="IPR029072">
    <property type="entry name" value="YebC-like"/>
</dbReference>
<dbReference type="NCBIfam" id="NF001030">
    <property type="entry name" value="PRK00110.1"/>
    <property type="match status" value="1"/>
</dbReference>
<dbReference type="NCBIfam" id="NF009044">
    <property type="entry name" value="PRK12378.1"/>
    <property type="match status" value="1"/>
</dbReference>
<dbReference type="NCBIfam" id="TIGR01033">
    <property type="entry name" value="YebC/PmpR family DNA-binding transcriptional regulator"/>
    <property type="match status" value="1"/>
</dbReference>
<dbReference type="PANTHER" id="PTHR12532:SF6">
    <property type="entry name" value="TRANSCRIPTIONAL REGULATORY PROTEIN YEBC-RELATED"/>
    <property type="match status" value="1"/>
</dbReference>
<dbReference type="PANTHER" id="PTHR12532">
    <property type="entry name" value="TRANSLATIONAL ACTIVATOR OF CYTOCHROME C OXIDASE 1"/>
    <property type="match status" value="1"/>
</dbReference>
<dbReference type="Pfam" id="PF20772">
    <property type="entry name" value="TACO1_YebC_N"/>
    <property type="match status" value="1"/>
</dbReference>
<dbReference type="Pfam" id="PF01709">
    <property type="entry name" value="Transcrip_reg"/>
    <property type="match status" value="1"/>
</dbReference>
<dbReference type="SUPFAM" id="SSF75625">
    <property type="entry name" value="YebC-like"/>
    <property type="match status" value="1"/>
</dbReference>